<dbReference type="GO" id="GO:0005576">
    <property type="term" value="C:extracellular region"/>
    <property type="evidence" value="ECO:0007669"/>
    <property type="project" value="UniProtKB-SubCell"/>
</dbReference>
<dbReference type="GO" id="GO:0007218">
    <property type="term" value="P:neuropeptide signaling pathway"/>
    <property type="evidence" value="ECO:0007669"/>
    <property type="project" value="UniProtKB-KW"/>
</dbReference>
<dbReference type="InterPro" id="IPR013231">
    <property type="entry name" value="Periviscerokinin"/>
</dbReference>
<dbReference type="Pfam" id="PF08259">
    <property type="entry name" value="Periviscerokin"/>
    <property type="match status" value="1"/>
</dbReference>
<evidence type="ECO:0000250" key="1">
    <source>
        <dbReference type="UniProtKB" id="P83923"/>
    </source>
</evidence>
<evidence type="ECO:0000250" key="2">
    <source>
        <dbReference type="UniProtKB" id="P84375"/>
    </source>
</evidence>
<evidence type="ECO:0000255" key="3"/>
<evidence type="ECO:0000269" key="4">
    <source>
    </source>
</evidence>
<evidence type="ECO:0000303" key="5">
    <source>
    </source>
</evidence>
<evidence type="ECO:0000305" key="6"/>
<name>PVK2_PARSA</name>
<reference evidence="6" key="1">
    <citation type="journal article" date="2010" name="Peptides">
        <title>CAPA-peptides of praying mantids (Mantodea).</title>
        <authorList>
            <person name="Koehler R."/>
            <person name="Predel R."/>
        </authorList>
    </citation>
    <scope>PROTEIN SEQUENCE</scope>
    <scope>MASS SPECTROMETRY</scope>
    <scope>AMIDATION AT LEU-11</scope>
    <source>
        <tissue evidence="4">Abdominal perisympathetic organs</tissue>
    </source>
</reference>
<feature type="peptide" id="PRO_0000395592" description="Periviscerokinin-2" evidence="4">
    <location>
        <begin position="1"/>
        <end position="11"/>
    </location>
</feature>
<feature type="modified residue" description="Leucine amide" evidence="4">
    <location>
        <position position="11"/>
    </location>
</feature>
<feature type="unsure residue" description="L or I" evidence="4">
    <location>
        <position position="5"/>
    </location>
</feature>
<feature type="unsure residue" description="I or L" evidence="4">
    <location>
        <position position="6"/>
    </location>
</feature>
<feature type="unsure residue" description="L or I" evidence="4">
    <location>
        <position position="11"/>
    </location>
</feature>
<proteinExistence type="evidence at protein level"/>
<accession>P86664</accession>
<keyword id="KW-0027">Amidation</keyword>
<keyword id="KW-0903">Direct protein sequencing</keyword>
<keyword id="KW-0527">Neuropeptide</keyword>
<keyword id="KW-0964">Secreted</keyword>
<comment type="function">
    <text evidence="1">Mediates visceral muscle contractile activity (myotropic activity).</text>
</comment>
<comment type="subcellular location">
    <subcellularLocation>
        <location evidence="2">Secreted</location>
    </subcellularLocation>
</comment>
<comment type="mass spectrometry" mass="1116.7" method="MALDI" evidence="4"/>
<comment type="similarity">
    <text evidence="3">Belongs to the periviscerokinin family.</text>
</comment>
<sequence length="11" mass="1117">GSSGLIAFPRL</sequence>
<protein>
    <recommendedName>
        <fullName evidence="5">Periviscerokinin-2</fullName>
    </recommendedName>
</protein>
<organism>
    <name type="scientific">Paramantis sacra</name>
    <name type="common">Praying mantis</name>
    <dbReference type="NCBI Taxonomy" id="765343"/>
    <lineage>
        <taxon>Eukaryota</taxon>
        <taxon>Metazoa</taxon>
        <taxon>Ecdysozoa</taxon>
        <taxon>Arthropoda</taxon>
        <taxon>Hexapoda</taxon>
        <taxon>Insecta</taxon>
        <taxon>Pterygota</taxon>
        <taxon>Neoptera</taxon>
        <taxon>Polyneoptera</taxon>
        <taxon>Dictyoptera</taxon>
        <taxon>Mantodea</taxon>
        <taxon>Eumantodea</taxon>
        <taxon>Mantoidea</taxon>
        <taxon>Mantidae</taxon>
        <taxon>Tenoderinae</taxon>
        <taxon>Paramantini</taxon>
        <taxon>Paramantis</taxon>
    </lineage>
</organism>